<accession>P0ACI3</accession>
<accession>P37390</accession>
<accession>Q2M7N2</accession>
<reference key="1">
    <citation type="journal article" date="1994" name="Nucleic Acids Res.">
        <title>Analysis of the Escherichia coli genome. V. DNA sequence of the region from 76.0 to 81.5 minutes.</title>
        <authorList>
            <person name="Sofia H.J."/>
            <person name="Burland V."/>
            <person name="Daniels D.L."/>
            <person name="Plunkett G. III"/>
            <person name="Blattner F.R."/>
        </authorList>
    </citation>
    <scope>NUCLEOTIDE SEQUENCE [LARGE SCALE GENOMIC DNA]</scope>
    <source>
        <strain>K12 / MG1655 / ATCC 47076</strain>
    </source>
</reference>
<reference key="2">
    <citation type="journal article" date="1997" name="Science">
        <title>The complete genome sequence of Escherichia coli K-12.</title>
        <authorList>
            <person name="Blattner F.R."/>
            <person name="Plunkett G. III"/>
            <person name="Bloch C.A."/>
            <person name="Perna N.T."/>
            <person name="Burland V."/>
            <person name="Riley M."/>
            <person name="Collado-Vides J."/>
            <person name="Glasner J.D."/>
            <person name="Rode C.K."/>
            <person name="Mayhew G.F."/>
            <person name="Gregor J."/>
            <person name="Davis N.W."/>
            <person name="Kirkpatrick H.A."/>
            <person name="Goeden M.A."/>
            <person name="Rose D.J."/>
            <person name="Mau B."/>
            <person name="Shao Y."/>
        </authorList>
    </citation>
    <scope>NUCLEOTIDE SEQUENCE [LARGE SCALE GENOMIC DNA]</scope>
    <source>
        <strain>K12 / MG1655 / ATCC 47076</strain>
    </source>
</reference>
<reference key="3">
    <citation type="journal article" date="2006" name="Mol. Syst. Biol.">
        <title>Highly accurate genome sequences of Escherichia coli K-12 strains MG1655 and W3110.</title>
        <authorList>
            <person name="Hayashi K."/>
            <person name="Morooka N."/>
            <person name="Yamamoto Y."/>
            <person name="Fujita K."/>
            <person name="Isono K."/>
            <person name="Choi S."/>
            <person name="Ohtsubo E."/>
            <person name="Baba T."/>
            <person name="Wanner B.L."/>
            <person name="Mori H."/>
            <person name="Horiuchi T."/>
        </authorList>
    </citation>
    <scope>NUCLEOTIDE SEQUENCE [LARGE SCALE GENOMIC DNA]</scope>
    <source>
        <strain>K12 / W3110 / ATCC 27325 / DSM 5911</strain>
    </source>
</reference>
<organism>
    <name type="scientific">Escherichia coli (strain K12)</name>
    <dbReference type="NCBI Taxonomy" id="83333"/>
    <lineage>
        <taxon>Bacteria</taxon>
        <taxon>Pseudomonadati</taxon>
        <taxon>Pseudomonadota</taxon>
        <taxon>Gammaproteobacteria</taxon>
        <taxon>Enterobacterales</taxon>
        <taxon>Enterobacteriaceae</taxon>
        <taxon>Escherichia</taxon>
    </lineage>
</organism>
<proteinExistence type="evidence at protein level"/>
<dbReference type="EMBL" id="U00039">
    <property type="protein sequence ID" value="AAB18546.1"/>
    <property type="molecule type" value="Genomic_DNA"/>
</dbReference>
<dbReference type="EMBL" id="U00096">
    <property type="protein sequence ID" value="AAC76593.1"/>
    <property type="molecule type" value="Genomic_DNA"/>
</dbReference>
<dbReference type="EMBL" id="AP009048">
    <property type="protein sequence ID" value="BAE77724.1"/>
    <property type="molecule type" value="Genomic_DNA"/>
</dbReference>
<dbReference type="PIR" id="S47790">
    <property type="entry name" value="S47790"/>
</dbReference>
<dbReference type="RefSeq" id="NP_418026.1">
    <property type="nucleotide sequence ID" value="NC_000913.3"/>
</dbReference>
<dbReference type="RefSeq" id="WP_000494484.1">
    <property type="nucleotide sequence ID" value="NZ_STEB01000018.1"/>
</dbReference>
<dbReference type="PDB" id="4FE4">
    <property type="method" value="X-ray"/>
    <property type="resolution" value="3.45 A"/>
    <property type="chains" value="A/B/C=1-392"/>
</dbReference>
<dbReference type="PDB" id="4FE7">
    <property type="method" value="X-ray"/>
    <property type="resolution" value="2.90 A"/>
    <property type="chains" value="A=1-392"/>
</dbReference>
<dbReference type="PDBsum" id="4FE4"/>
<dbReference type="PDBsum" id="4FE7"/>
<dbReference type="SMR" id="P0ACI3"/>
<dbReference type="BioGRID" id="4262544">
    <property type="interactions" value="87"/>
</dbReference>
<dbReference type="FunCoup" id="P0ACI3">
    <property type="interactions" value="84"/>
</dbReference>
<dbReference type="STRING" id="511145.b3569"/>
<dbReference type="jPOST" id="P0ACI3"/>
<dbReference type="PaxDb" id="511145-b3569"/>
<dbReference type="EnsemblBacteria" id="AAC76593">
    <property type="protein sequence ID" value="AAC76593"/>
    <property type="gene ID" value="b3569"/>
</dbReference>
<dbReference type="GeneID" id="75203010"/>
<dbReference type="GeneID" id="948086"/>
<dbReference type="KEGG" id="ecj:JW3541"/>
<dbReference type="KEGG" id="eco:b3569"/>
<dbReference type="KEGG" id="ecoc:C3026_19350"/>
<dbReference type="PATRIC" id="fig|1411691.4.peg.3143"/>
<dbReference type="EchoBASE" id="EB4154"/>
<dbReference type="eggNOG" id="COG1609">
    <property type="taxonomic scope" value="Bacteria"/>
</dbReference>
<dbReference type="eggNOG" id="COG2207">
    <property type="taxonomic scope" value="Bacteria"/>
</dbReference>
<dbReference type="HOGENOM" id="CLU_042405_1_0_6"/>
<dbReference type="InParanoid" id="P0ACI3"/>
<dbReference type="OMA" id="VEAAFMH"/>
<dbReference type="OrthoDB" id="8766450at2"/>
<dbReference type="PhylomeDB" id="P0ACI3"/>
<dbReference type="BioCyc" id="EcoCyc:EG20253-MONOMER"/>
<dbReference type="EvolutionaryTrace" id="P0ACI3"/>
<dbReference type="PRO" id="PR:P0ACI3"/>
<dbReference type="Proteomes" id="UP000000625">
    <property type="component" value="Chromosome"/>
</dbReference>
<dbReference type="GO" id="GO:0003700">
    <property type="term" value="F:DNA-binding transcription factor activity"/>
    <property type="evidence" value="ECO:0000314"/>
    <property type="project" value="EcoCyc"/>
</dbReference>
<dbReference type="GO" id="GO:0000976">
    <property type="term" value="F:transcription cis-regulatory region binding"/>
    <property type="evidence" value="ECO:0000318"/>
    <property type="project" value="GO_Central"/>
</dbReference>
<dbReference type="GO" id="GO:0006355">
    <property type="term" value="P:regulation of DNA-templated transcription"/>
    <property type="evidence" value="ECO:0000314"/>
    <property type="project" value="EcoCyc"/>
</dbReference>
<dbReference type="CDD" id="cd01543">
    <property type="entry name" value="PBP1_XylR"/>
    <property type="match status" value="1"/>
</dbReference>
<dbReference type="FunFam" id="1.10.10.60:FF:000136">
    <property type="entry name" value="Transcriptional regulator, AraC family"/>
    <property type="match status" value="1"/>
</dbReference>
<dbReference type="Gene3D" id="3.40.50.2300">
    <property type="match status" value="2"/>
</dbReference>
<dbReference type="Gene3D" id="1.10.10.60">
    <property type="entry name" value="Homeodomain-like"/>
    <property type="match status" value="1"/>
</dbReference>
<dbReference type="InterPro" id="IPR009057">
    <property type="entry name" value="Homeodomain-like_sf"/>
</dbReference>
<dbReference type="InterPro" id="IPR018060">
    <property type="entry name" value="HTH_AraC"/>
</dbReference>
<dbReference type="InterPro" id="IPR018062">
    <property type="entry name" value="HTH_AraC-typ_CS"/>
</dbReference>
<dbReference type="InterPro" id="IPR046335">
    <property type="entry name" value="LacI/GalR-like_sensor"/>
</dbReference>
<dbReference type="InterPro" id="IPR028082">
    <property type="entry name" value="Peripla_BP_I"/>
</dbReference>
<dbReference type="InterPro" id="IPR020449">
    <property type="entry name" value="Tscrpt_reg_AraC-type_HTH"/>
</dbReference>
<dbReference type="InterPro" id="IPR054031">
    <property type="entry name" value="XylR_PBP1"/>
</dbReference>
<dbReference type="PANTHER" id="PTHR30146">
    <property type="entry name" value="LACI-RELATED TRANSCRIPTIONAL REPRESSOR"/>
    <property type="match status" value="1"/>
</dbReference>
<dbReference type="PANTHER" id="PTHR30146:SF24">
    <property type="entry name" value="XYLOSE OPERON REGULATORY PROTEIN"/>
    <property type="match status" value="1"/>
</dbReference>
<dbReference type="Pfam" id="PF12833">
    <property type="entry name" value="HTH_18"/>
    <property type="match status" value="1"/>
</dbReference>
<dbReference type="Pfam" id="PF22177">
    <property type="entry name" value="PBP1_XylR"/>
    <property type="match status" value="1"/>
</dbReference>
<dbReference type="Pfam" id="PF13377">
    <property type="entry name" value="Peripla_BP_3"/>
    <property type="match status" value="1"/>
</dbReference>
<dbReference type="PRINTS" id="PR00032">
    <property type="entry name" value="HTHARAC"/>
</dbReference>
<dbReference type="SMART" id="SM00342">
    <property type="entry name" value="HTH_ARAC"/>
    <property type="match status" value="1"/>
</dbReference>
<dbReference type="SUPFAM" id="SSF46689">
    <property type="entry name" value="Homeodomain-like"/>
    <property type="match status" value="2"/>
</dbReference>
<dbReference type="SUPFAM" id="SSF53822">
    <property type="entry name" value="Periplasmic binding protein-like I"/>
    <property type="match status" value="1"/>
</dbReference>
<dbReference type="PROSITE" id="PS00041">
    <property type="entry name" value="HTH_ARAC_FAMILY_1"/>
    <property type="match status" value="1"/>
</dbReference>
<dbReference type="PROSITE" id="PS01124">
    <property type="entry name" value="HTH_ARAC_FAMILY_2"/>
    <property type="match status" value="1"/>
</dbReference>
<feature type="chain" id="PRO_0000194597" description="Xylose operon regulatory protein">
    <location>
        <begin position="1"/>
        <end position="392"/>
    </location>
</feature>
<feature type="domain" description="HTH araC/xylS-type" evidence="1">
    <location>
        <begin position="288"/>
        <end position="386"/>
    </location>
</feature>
<feature type="DNA-binding region" description="H-T-H motif" evidence="1">
    <location>
        <begin position="305"/>
        <end position="326"/>
    </location>
</feature>
<feature type="DNA-binding region" description="H-T-H motif" evidence="1">
    <location>
        <begin position="353"/>
        <end position="376"/>
    </location>
</feature>
<feature type="strand" evidence="3">
    <location>
        <begin position="6"/>
        <end position="11"/>
    </location>
</feature>
<feature type="strand" evidence="2">
    <location>
        <begin position="14"/>
        <end position="16"/>
    </location>
</feature>
<feature type="helix" evidence="3">
    <location>
        <begin position="17"/>
        <end position="33"/>
    </location>
</feature>
<feature type="strand" evidence="3">
    <location>
        <begin position="37"/>
        <end position="41"/>
    </location>
</feature>
<feature type="strand" evidence="3">
    <location>
        <begin position="58"/>
        <end position="63"/>
    </location>
</feature>
<feature type="helix" evidence="3">
    <location>
        <begin position="67"/>
        <end position="73"/>
    </location>
</feature>
<feature type="strand" evidence="3">
    <location>
        <begin position="80"/>
        <end position="85"/>
    </location>
</feature>
<feature type="helix" evidence="3">
    <location>
        <begin position="90"/>
        <end position="92"/>
    </location>
</feature>
<feature type="strand" evidence="3">
    <location>
        <begin position="95"/>
        <end position="101"/>
    </location>
</feature>
<feature type="helix" evidence="3">
    <location>
        <begin position="103"/>
        <end position="116"/>
    </location>
</feature>
<feature type="strand" evidence="3">
    <location>
        <begin position="121"/>
        <end position="125"/>
    </location>
</feature>
<feature type="helix" evidence="3">
    <location>
        <begin position="134"/>
        <end position="147"/>
    </location>
</feature>
<feature type="strand" evidence="3">
    <location>
        <begin position="150"/>
        <end position="152"/>
    </location>
</feature>
<feature type="strand" evidence="3">
    <location>
        <begin position="155"/>
        <end position="157"/>
    </location>
</feature>
<feature type="helix" evidence="3">
    <location>
        <begin position="167"/>
        <end position="180"/>
    </location>
</feature>
<feature type="strand" evidence="3">
    <location>
        <begin position="185"/>
        <end position="191"/>
    </location>
</feature>
<feature type="helix" evidence="3">
    <location>
        <begin position="192"/>
        <end position="205"/>
    </location>
</feature>
<feature type="turn" evidence="3">
    <location>
        <begin position="209"/>
        <end position="212"/>
    </location>
</feature>
<feature type="strand" evidence="3">
    <location>
        <begin position="213"/>
        <end position="219"/>
    </location>
</feature>
<feature type="strand" evidence="3">
    <location>
        <begin position="224"/>
        <end position="226"/>
    </location>
</feature>
<feature type="strand" evidence="2">
    <location>
        <begin position="227"/>
        <end position="230"/>
    </location>
</feature>
<feature type="strand" evidence="3">
    <location>
        <begin position="233"/>
        <end position="236"/>
    </location>
</feature>
<feature type="helix" evidence="3">
    <location>
        <begin position="239"/>
        <end position="254"/>
    </location>
</feature>
<feature type="strand" evidence="3">
    <location>
        <begin position="263"/>
        <end position="266"/>
    </location>
</feature>
<feature type="strand" evidence="3">
    <location>
        <begin position="270"/>
        <end position="272"/>
    </location>
</feature>
<feature type="helix" evidence="3">
    <location>
        <begin position="275"/>
        <end position="277"/>
    </location>
</feature>
<feature type="helix" evidence="3">
    <location>
        <begin position="285"/>
        <end position="297"/>
    </location>
</feature>
<feature type="helix" evidence="3">
    <location>
        <begin position="298"/>
        <end position="300"/>
    </location>
</feature>
<feature type="helix" evidence="3">
    <location>
        <begin position="304"/>
        <end position="310"/>
    </location>
</feature>
<feature type="helix" evidence="3">
    <location>
        <begin position="315"/>
        <end position="326"/>
    </location>
</feature>
<feature type="helix" evidence="3">
    <location>
        <begin position="330"/>
        <end position="348"/>
    </location>
</feature>
<feature type="helix" evidence="3">
    <location>
        <begin position="353"/>
        <end position="359"/>
    </location>
</feature>
<feature type="helix" evidence="3">
    <location>
        <begin position="365"/>
        <end position="375"/>
    </location>
</feature>
<feature type="strand" evidence="3">
    <location>
        <begin position="376"/>
        <end position="378"/>
    </location>
</feature>
<feature type="helix" evidence="3">
    <location>
        <begin position="380"/>
        <end position="387"/>
    </location>
</feature>
<comment type="function">
    <text>Regulatory protein for the xylBAFGHR operon.</text>
</comment>
<keyword id="KW-0002">3D-structure</keyword>
<keyword id="KW-0238">DNA-binding</keyword>
<keyword id="KW-1185">Reference proteome</keyword>
<keyword id="KW-0804">Transcription</keyword>
<keyword id="KW-0805">Transcription regulation</keyword>
<protein>
    <recommendedName>
        <fullName>Xylose operon regulatory protein</fullName>
    </recommendedName>
</protein>
<evidence type="ECO:0000255" key="1">
    <source>
        <dbReference type="PROSITE-ProRule" id="PRU00593"/>
    </source>
</evidence>
<evidence type="ECO:0007829" key="2">
    <source>
        <dbReference type="PDB" id="4FE4"/>
    </source>
</evidence>
<evidence type="ECO:0007829" key="3">
    <source>
        <dbReference type="PDB" id="4FE7"/>
    </source>
</evidence>
<sequence>MFTKRHRITLLFNANKAYDRQVVEGVGEYLQASQSEWDIFIEEDFRARIDKIKDWLGDGVIADFDDKQIEQALADVDVPIVGVGGSYHLAESYPPVHYIATDNYALVESAFLHLKEKGVNRFAFYGLPESSGKRWATEREYAFRQLVAEEKYRGVVYQGLETAPENWQHAQNRLADWLQTLPPQTGIIAVTDARARHILQVCEHLHIPVPEKLCVIGIDNEELTRYLSRVALSSVAQGARQMGYQAAKLLHRLLDKEEMPLQRILVPPVRVIERRSTDYRSLTDPAVIQAMHYIRNHACKGIKVDQVLDAVGISRSNLEKRFKEEVGETIHAMIHAEKLEKARSLLISTTLSINEISQMCGYPSLQYFYSVFKKAYDTTPKEYRDVNSEVML</sequence>
<gene>
    <name type="primary">xylR</name>
    <name type="ordered locus">b3569</name>
    <name type="ordered locus">JW3541</name>
</gene>
<name>XYLR_ECOLI</name>